<protein>
    <recommendedName>
        <fullName evidence="1">Large ribosomal subunit protein bL35</fullName>
    </recommendedName>
    <alternativeName>
        <fullName evidence="2">50S ribosomal protein L35</fullName>
    </alternativeName>
</protein>
<proteinExistence type="inferred from homology"/>
<name>RL35_SYNE7</name>
<sequence length="66" mass="7840">MPKLKTRKAAAKRFRISGNGKAIRRKAFKNHLLQHKNATRRRRLSQPEVVHETDQERVKLMLPYSF</sequence>
<accession>Q31NR1</accession>
<evidence type="ECO:0000255" key="1">
    <source>
        <dbReference type="HAMAP-Rule" id="MF_00514"/>
    </source>
</evidence>
<evidence type="ECO:0000305" key="2"/>
<comment type="similarity">
    <text evidence="1">Belongs to the bacterial ribosomal protein bL35 family.</text>
</comment>
<dbReference type="EMBL" id="CP000100">
    <property type="protein sequence ID" value="ABB57308.1"/>
    <property type="molecule type" value="Genomic_DNA"/>
</dbReference>
<dbReference type="RefSeq" id="WP_011242588.1">
    <property type="nucleotide sequence ID" value="NZ_JACJTX010000003.1"/>
</dbReference>
<dbReference type="SMR" id="Q31NR1"/>
<dbReference type="STRING" id="1140.Synpcc7942_1278"/>
<dbReference type="PaxDb" id="1140-Synpcc7942_1278"/>
<dbReference type="GeneID" id="72430139"/>
<dbReference type="KEGG" id="syf:Synpcc7942_1278"/>
<dbReference type="eggNOG" id="COG0291">
    <property type="taxonomic scope" value="Bacteria"/>
</dbReference>
<dbReference type="HOGENOM" id="CLU_169643_4_0_3"/>
<dbReference type="OrthoDB" id="47476at2"/>
<dbReference type="BioCyc" id="SYNEL:SYNPCC7942_1278-MONOMER"/>
<dbReference type="Proteomes" id="UP000889800">
    <property type="component" value="Chromosome"/>
</dbReference>
<dbReference type="GO" id="GO:0022625">
    <property type="term" value="C:cytosolic large ribosomal subunit"/>
    <property type="evidence" value="ECO:0007669"/>
    <property type="project" value="TreeGrafter"/>
</dbReference>
<dbReference type="GO" id="GO:0003735">
    <property type="term" value="F:structural constituent of ribosome"/>
    <property type="evidence" value="ECO:0007669"/>
    <property type="project" value="InterPro"/>
</dbReference>
<dbReference type="GO" id="GO:0006412">
    <property type="term" value="P:translation"/>
    <property type="evidence" value="ECO:0007669"/>
    <property type="project" value="UniProtKB-UniRule"/>
</dbReference>
<dbReference type="FunFam" id="4.10.410.60:FF:000001">
    <property type="entry name" value="50S ribosomal protein L35"/>
    <property type="match status" value="1"/>
</dbReference>
<dbReference type="Gene3D" id="4.10.410.60">
    <property type="match status" value="1"/>
</dbReference>
<dbReference type="HAMAP" id="MF_00514">
    <property type="entry name" value="Ribosomal_bL35"/>
    <property type="match status" value="1"/>
</dbReference>
<dbReference type="InterPro" id="IPR001706">
    <property type="entry name" value="Ribosomal_bL35"/>
</dbReference>
<dbReference type="InterPro" id="IPR021137">
    <property type="entry name" value="Ribosomal_bL35-like"/>
</dbReference>
<dbReference type="InterPro" id="IPR018265">
    <property type="entry name" value="Ribosomal_bL35_CS"/>
</dbReference>
<dbReference type="InterPro" id="IPR037229">
    <property type="entry name" value="Ribosomal_bL35_sf"/>
</dbReference>
<dbReference type="NCBIfam" id="TIGR00001">
    <property type="entry name" value="rpmI_bact"/>
    <property type="match status" value="1"/>
</dbReference>
<dbReference type="PANTHER" id="PTHR33343">
    <property type="entry name" value="54S RIBOSOMAL PROTEIN BL35M"/>
    <property type="match status" value="1"/>
</dbReference>
<dbReference type="PANTHER" id="PTHR33343:SF1">
    <property type="entry name" value="LARGE RIBOSOMAL SUBUNIT PROTEIN BL35M"/>
    <property type="match status" value="1"/>
</dbReference>
<dbReference type="Pfam" id="PF01632">
    <property type="entry name" value="Ribosomal_L35p"/>
    <property type="match status" value="1"/>
</dbReference>
<dbReference type="PRINTS" id="PR00064">
    <property type="entry name" value="RIBOSOMALL35"/>
</dbReference>
<dbReference type="SUPFAM" id="SSF143034">
    <property type="entry name" value="L35p-like"/>
    <property type="match status" value="1"/>
</dbReference>
<dbReference type="PROSITE" id="PS00936">
    <property type="entry name" value="RIBOSOMAL_L35"/>
    <property type="match status" value="1"/>
</dbReference>
<organism>
    <name type="scientific">Synechococcus elongatus (strain ATCC 33912 / PCC 7942 / FACHB-805)</name>
    <name type="common">Anacystis nidulans R2</name>
    <dbReference type="NCBI Taxonomy" id="1140"/>
    <lineage>
        <taxon>Bacteria</taxon>
        <taxon>Bacillati</taxon>
        <taxon>Cyanobacteriota</taxon>
        <taxon>Cyanophyceae</taxon>
        <taxon>Synechococcales</taxon>
        <taxon>Synechococcaceae</taxon>
        <taxon>Synechococcus</taxon>
    </lineage>
</organism>
<keyword id="KW-1185">Reference proteome</keyword>
<keyword id="KW-0687">Ribonucleoprotein</keyword>
<keyword id="KW-0689">Ribosomal protein</keyword>
<feature type="chain" id="PRO_0000258775" description="Large ribosomal subunit protein bL35">
    <location>
        <begin position="1"/>
        <end position="66"/>
    </location>
</feature>
<reference key="1">
    <citation type="submission" date="2005-08" db="EMBL/GenBank/DDBJ databases">
        <title>Complete sequence of chromosome 1 of Synechococcus elongatus PCC 7942.</title>
        <authorList>
            <consortium name="US DOE Joint Genome Institute"/>
            <person name="Copeland A."/>
            <person name="Lucas S."/>
            <person name="Lapidus A."/>
            <person name="Barry K."/>
            <person name="Detter J.C."/>
            <person name="Glavina T."/>
            <person name="Hammon N."/>
            <person name="Israni S."/>
            <person name="Pitluck S."/>
            <person name="Schmutz J."/>
            <person name="Larimer F."/>
            <person name="Land M."/>
            <person name="Kyrpides N."/>
            <person name="Lykidis A."/>
            <person name="Golden S."/>
            <person name="Richardson P."/>
        </authorList>
    </citation>
    <scope>NUCLEOTIDE SEQUENCE [LARGE SCALE GENOMIC DNA]</scope>
    <source>
        <strain>ATCC 33912 / PCC 7942 / FACHB-805</strain>
    </source>
</reference>
<gene>
    <name evidence="1" type="primary">rpmI</name>
    <name evidence="1" type="synonym">rpl35</name>
    <name type="ordered locus">Synpcc7942_1278</name>
</gene>